<gene>
    <name evidence="1" type="primary">ispDF</name>
    <name type="ordered locus">BH05820</name>
</gene>
<proteinExistence type="inferred from homology"/>
<dbReference type="EC" id="2.7.7.60" evidence="1"/>
<dbReference type="EC" id="4.6.1.12" evidence="1"/>
<dbReference type="EMBL" id="BX897699">
    <property type="protein sequence ID" value="CAF27390.1"/>
    <property type="status" value="ALT_INIT"/>
    <property type="molecule type" value="Genomic_DNA"/>
</dbReference>
<dbReference type="RefSeq" id="WP_075320647.1">
    <property type="nucleotide sequence ID" value="NZ_LRIJ02000001.1"/>
</dbReference>
<dbReference type="SMR" id="Q6G3Z8"/>
<dbReference type="PaxDb" id="283166-BH05820"/>
<dbReference type="EnsemblBacteria" id="CAF27390">
    <property type="protein sequence ID" value="CAF27390"/>
    <property type="gene ID" value="BH05820"/>
</dbReference>
<dbReference type="KEGG" id="bhe:BH05820"/>
<dbReference type="eggNOG" id="COG0245">
    <property type="taxonomic scope" value="Bacteria"/>
</dbReference>
<dbReference type="eggNOG" id="COG1211">
    <property type="taxonomic scope" value="Bacteria"/>
</dbReference>
<dbReference type="UniPathway" id="UPA00056">
    <property type="reaction ID" value="UER00093"/>
</dbReference>
<dbReference type="UniPathway" id="UPA00056">
    <property type="reaction ID" value="UER00095"/>
</dbReference>
<dbReference type="Proteomes" id="UP000000421">
    <property type="component" value="Chromosome"/>
</dbReference>
<dbReference type="GO" id="GO:0008685">
    <property type="term" value="F:2-C-methyl-D-erythritol 2,4-cyclodiphosphate synthase activity"/>
    <property type="evidence" value="ECO:0007669"/>
    <property type="project" value="UniProtKB-UniRule"/>
</dbReference>
<dbReference type="GO" id="GO:0050518">
    <property type="term" value="F:2-C-methyl-D-erythritol 4-phosphate cytidylyltransferase activity"/>
    <property type="evidence" value="ECO:0007669"/>
    <property type="project" value="UniProtKB-UniRule"/>
</dbReference>
<dbReference type="GO" id="GO:0046872">
    <property type="term" value="F:metal ion binding"/>
    <property type="evidence" value="ECO:0007669"/>
    <property type="project" value="UniProtKB-KW"/>
</dbReference>
<dbReference type="GO" id="GO:0019288">
    <property type="term" value="P:isopentenyl diphosphate biosynthetic process, methylerythritol 4-phosphate pathway"/>
    <property type="evidence" value="ECO:0007669"/>
    <property type="project" value="UniProtKB-UniRule"/>
</dbReference>
<dbReference type="GO" id="GO:0016114">
    <property type="term" value="P:terpenoid biosynthetic process"/>
    <property type="evidence" value="ECO:0007669"/>
    <property type="project" value="InterPro"/>
</dbReference>
<dbReference type="CDD" id="cd02516">
    <property type="entry name" value="CDP-ME_synthetase"/>
    <property type="match status" value="1"/>
</dbReference>
<dbReference type="CDD" id="cd00554">
    <property type="entry name" value="MECDP_synthase"/>
    <property type="match status" value="1"/>
</dbReference>
<dbReference type="FunFam" id="3.90.550.10:FF:000003">
    <property type="entry name" value="2-C-methyl-D-erythritol 4-phosphate cytidylyltransferase"/>
    <property type="match status" value="1"/>
</dbReference>
<dbReference type="Gene3D" id="3.30.1330.50">
    <property type="entry name" value="2-C-methyl-D-erythritol 2,4-cyclodiphosphate synthase"/>
    <property type="match status" value="1"/>
</dbReference>
<dbReference type="Gene3D" id="3.90.550.10">
    <property type="entry name" value="Spore Coat Polysaccharide Biosynthesis Protein SpsA, Chain A"/>
    <property type="match status" value="1"/>
</dbReference>
<dbReference type="HAMAP" id="MF_00108">
    <property type="entry name" value="IspD"/>
    <property type="match status" value="1"/>
</dbReference>
<dbReference type="HAMAP" id="MF_01520">
    <property type="entry name" value="IspDF"/>
    <property type="match status" value="1"/>
</dbReference>
<dbReference type="HAMAP" id="MF_00107">
    <property type="entry name" value="IspF"/>
    <property type="match status" value="1"/>
</dbReference>
<dbReference type="InterPro" id="IPR001228">
    <property type="entry name" value="IspD"/>
</dbReference>
<dbReference type="InterPro" id="IPR026596">
    <property type="entry name" value="IspD/F"/>
</dbReference>
<dbReference type="InterPro" id="IPR034683">
    <property type="entry name" value="IspD/TarI"/>
</dbReference>
<dbReference type="InterPro" id="IPR003526">
    <property type="entry name" value="MECDP_synthase"/>
</dbReference>
<dbReference type="InterPro" id="IPR020555">
    <property type="entry name" value="MECDP_synthase_CS"/>
</dbReference>
<dbReference type="InterPro" id="IPR036571">
    <property type="entry name" value="MECDP_synthase_sf"/>
</dbReference>
<dbReference type="InterPro" id="IPR029044">
    <property type="entry name" value="Nucleotide-diphossugar_trans"/>
</dbReference>
<dbReference type="NCBIfam" id="TIGR00453">
    <property type="entry name" value="ispD"/>
    <property type="match status" value="1"/>
</dbReference>
<dbReference type="NCBIfam" id="TIGR00151">
    <property type="entry name" value="ispF"/>
    <property type="match status" value="1"/>
</dbReference>
<dbReference type="NCBIfam" id="NF006899">
    <property type="entry name" value="PRK09382.1"/>
    <property type="match status" value="1"/>
</dbReference>
<dbReference type="PANTHER" id="PTHR43181">
    <property type="entry name" value="2-C-METHYL-D-ERYTHRITOL 2,4-CYCLODIPHOSPHATE SYNTHASE, CHLOROPLASTIC"/>
    <property type="match status" value="1"/>
</dbReference>
<dbReference type="PANTHER" id="PTHR43181:SF1">
    <property type="entry name" value="2-C-METHYL-D-ERYTHRITOL 2,4-CYCLODIPHOSPHATE SYNTHASE, CHLOROPLASTIC"/>
    <property type="match status" value="1"/>
</dbReference>
<dbReference type="Pfam" id="PF01128">
    <property type="entry name" value="IspD"/>
    <property type="match status" value="1"/>
</dbReference>
<dbReference type="Pfam" id="PF02542">
    <property type="entry name" value="YgbB"/>
    <property type="match status" value="1"/>
</dbReference>
<dbReference type="SUPFAM" id="SSF69765">
    <property type="entry name" value="IpsF-like"/>
    <property type="match status" value="1"/>
</dbReference>
<dbReference type="SUPFAM" id="SSF53448">
    <property type="entry name" value="Nucleotide-diphospho-sugar transferases"/>
    <property type="match status" value="1"/>
</dbReference>
<dbReference type="PROSITE" id="PS01350">
    <property type="entry name" value="ISPF"/>
    <property type="match status" value="1"/>
</dbReference>
<organism>
    <name type="scientific">Bartonella henselae (strain ATCC 49882 / DSM 28221 / CCUG 30454 / Houston 1)</name>
    <name type="common">Rochalimaea henselae</name>
    <dbReference type="NCBI Taxonomy" id="283166"/>
    <lineage>
        <taxon>Bacteria</taxon>
        <taxon>Pseudomonadati</taxon>
        <taxon>Pseudomonadota</taxon>
        <taxon>Alphaproteobacteria</taxon>
        <taxon>Hyphomicrobiales</taxon>
        <taxon>Bartonellaceae</taxon>
        <taxon>Bartonella</taxon>
    </lineage>
</organism>
<keyword id="KW-0414">Isoprene biosynthesis</keyword>
<keyword id="KW-0456">Lyase</keyword>
<keyword id="KW-0479">Metal-binding</keyword>
<keyword id="KW-0511">Multifunctional enzyme</keyword>
<keyword id="KW-0548">Nucleotidyltransferase</keyword>
<keyword id="KW-0808">Transferase</keyword>
<protein>
    <recommendedName>
        <fullName evidence="1">Bifunctional enzyme IspD/IspF</fullName>
    </recommendedName>
    <domain>
        <recommendedName>
            <fullName evidence="1">2-C-methyl-D-erythritol 4-phosphate cytidylyltransferase</fullName>
            <ecNumber evidence="1">2.7.7.60</ecNumber>
        </recommendedName>
        <alternativeName>
            <fullName evidence="1">4-diphosphocytidyl-2C-methyl-D-erythritol synthase</fullName>
        </alternativeName>
        <alternativeName>
            <fullName evidence="1">MEP cytidylyltransferase</fullName>
            <shortName evidence="1">MCT</shortName>
        </alternativeName>
    </domain>
    <domain>
        <recommendedName>
            <fullName evidence="1">2-C-methyl-D-erythritol 2,4-cyclodiphosphate synthase</fullName>
            <shortName evidence="1">MECDP-synthase</shortName>
            <shortName evidence="1">MECPP-synthase</shortName>
            <shortName evidence="1">MECPS</shortName>
            <ecNumber evidence="1">4.6.1.12</ecNumber>
        </recommendedName>
    </domain>
</protein>
<comment type="function">
    <text evidence="1">Bifunctional enzyme that catalyzes the formation of 4-diphosphocytidyl-2-C-methyl-D-erythritol from CTP and 2-C-methyl-D-erythritol 4-phosphate (MEP) (IspD), and catalyzes the conversion of 4-diphosphocytidyl-2-C-methyl-D-erythritol 2-phosphate (CDP-ME2P) to 2-C-methyl-D-erythritol 2,4-cyclodiphosphate (ME-CPP) with a corresponding release of cytidine 5-monophosphate (CMP) (IspF).</text>
</comment>
<comment type="catalytic activity">
    <reaction evidence="1">
        <text>2-C-methyl-D-erythritol 4-phosphate + CTP + H(+) = 4-CDP-2-C-methyl-D-erythritol + diphosphate</text>
        <dbReference type="Rhea" id="RHEA:13429"/>
        <dbReference type="ChEBI" id="CHEBI:15378"/>
        <dbReference type="ChEBI" id="CHEBI:33019"/>
        <dbReference type="ChEBI" id="CHEBI:37563"/>
        <dbReference type="ChEBI" id="CHEBI:57823"/>
        <dbReference type="ChEBI" id="CHEBI:58262"/>
        <dbReference type="EC" id="2.7.7.60"/>
    </reaction>
</comment>
<comment type="catalytic activity">
    <reaction evidence="1">
        <text>4-CDP-2-C-methyl-D-erythritol 2-phosphate = 2-C-methyl-D-erythritol 2,4-cyclic diphosphate + CMP</text>
        <dbReference type="Rhea" id="RHEA:23864"/>
        <dbReference type="ChEBI" id="CHEBI:57919"/>
        <dbReference type="ChEBI" id="CHEBI:58483"/>
        <dbReference type="ChEBI" id="CHEBI:60377"/>
        <dbReference type="EC" id="4.6.1.12"/>
    </reaction>
</comment>
<comment type="cofactor">
    <cofactor evidence="1">
        <name>a divalent metal cation</name>
        <dbReference type="ChEBI" id="CHEBI:60240"/>
    </cofactor>
</comment>
<comment type="pathway">
    <text evidence="1">Isoprenoid biosynthesis; isopentenyl diphosphate biosynthesis via DXP pathway; isopentenyl diphosphate from 1-deoxy-D-xylulose 5-phosphate: step 2/6.</text>
</comment>
<comment type="pathway">
    <text evidence="1">Isoprenoid biosynthesis; isopentenyl diphosphate biosynthesis via DXP pathway; isopentenyl diphosphate from 1-deoxy-D-xylulose 5-phosphate: step 4/6.</text>
</comment>
<comment type="similarity">
    <text evidence="1">In the N-terminal section; belongs to the IspD/TarI cytidylyltransferase family. IspD subfamily.</text>
</comment>
<comment type="similarity">
    <text evidence="1">In the C-terminal section; belongs to the IspF family.</text>
</comment>
<comment type="sequence caution" evidence="2">
    <conflict type="erroneous initiation">
        <sequence resource="EMBL-CDS" id="CAF27390"/>
    </conflict>
    <text>Truncated N-terminus.</text>
</comment>
<reference key="1">
    <citation type="journal article" date="2004" name="Proc. Natl. Acad. Sci. U.S.A.">
        <title>The louse-borne human pathogen Bartonella quintana is a genomic derivative of the zoonotic agent Bartonella henselae.</title>
        <authorList>
            <person name="Alsmark U.C.M."/>
            <person name="Frank A.C."/>
            <person name="Karlberg E.O."/>
            <person name="Legault B.-A."/>
            <person name="Ardell D.H."/>
            <person name="Canbaeck B."/>
            <person name="Eriksson A.-S."/>
            <person name="Naeslund A.K."/>
            <person name="Handley S.A."/>
            <person name="Huvet M."/>
            <person name="La Scola B."/>
            <person name="Holmberg M."/>
            <person name="Andersson S.G.E."/>
        </authorList>
    </citation>
    <scope>NUCLEOTIDE SEQUENCE [LARGE SCALE GENOMIC DNA]</scope>
    <source>
        <strain>ATCC 49882 / DSM 28221 / CCUG 30454 / Houston 1</strain>
    </source>
</reference>
<evidence type="ECO:0000255" key="1">
    <source>
        <dbReference type="HAMAP-Rule" id="MF_01520"/>
    </source>
</evidence>
<evidence type="ECO:0000305" key="2"/>
<name>ISPDF_BARHE</name>
<sequence length="397" mass="44057">MSIAAVILAAGRGKRAGSLPKKPKQYRLLGQEPVICHTVRCFCQNPAITTIILVIHPEDRQICEQAIADFKEQLIIVEGGNTRQKSTLRGLQALRKFKPKYVHIHDGARPFVENKLLEQIHTTVTPQEGVLPVLAVCDTLKRINSTHHVLETIPRTHLYSAQTPQCFPFERILAAHEKAIKTCKKEFTDDSAIAEWFGISMRTIPGSPHNIKITWHEDLNTAHLYLQKKMQMFPDIRTGNGYDVHSFEEGNSLILCGIKIPFHKKLNGHSDADVALHALTDALLATRGAGDIGTHFPPSDPQWQNVSSEIFLRHALDIVKQAGGRIANVDITLIAEEPKIGPYRHAMVGNLMNMLTILPDRISIKATTNEKLGFIGRGEGIAAFATANVLYPGEIPK</sequence>
<accession>Q6G3Z8</accession>
<feature type="chain" id="PRO_0000075656" description="Bifunctional enzyme IspD/IspF">
    <location>
        <begin position="1"/>
        <end position="397"/>
    </location>
</feature>
<feature type="region of interest" description="2-C-methyl-D-erythritol 4-phosphate cytidylyltransferase" evidence="1">
    <location>
        <begin position="1"/>
        <end position="236"/>
    </location>
</feature>
<feature type="region of interest" description="2-C-methyl-D-erythritol 2,4-cyclodiphosphate synthase" evidence="1">
    <location>
        <begin position="237"/>
        <end position="397"/>
    </location>
</feature>
<feature type="binding site" evidence="1">
    <location>
        <begin position="243"/>
        <end position="245"/>
    </location>
    <ligand>
        <name>4-CDP-2-C-methyl-D-erythritol 2-phosphate</name>
        <dbReference type="ChEBI" id="CHEBI:57919"/>
    </ligand>
</feature>
<feature type="binding site" evidence="1">
    <location>
        <position position="243"/>
    </location>
    <ligand>
        <name>a divalent metal cation</name>
        <dbReference type="ChEBI" id="CHEBI:60240"/>
    </ligand>
</feature>
<feature type="binding site" evidence="1">
    <location>
        <position position="245"/>
    </location>
    <ligand>
        <name>a divalent metal cation</name>
        <dbReference type="ChEBI" id="CHEBI:60240"/>
    </ligand>
</feature>
<feature type="binding site" evidence="1">
    <location>
        <begin position="269"/>
        <end position="270"/>
    </location>
    <ligand>
        <name>4-CDP-2-C-methyl-D-erythritol 2-phosphate</name>
        <dbReference type="ChEBI" id="CHEBI:57919"/>
    </ligand>
</feature>
<feature type="binding site" evidence="1">
    <location>
        <position position="277"/>
    </location>
    <ligand>
        <name>a divalent metal cation</name>
        <dbReference type="ChEBI" id="CHEBI:60240"/>
    </ligand>
</feature>
<feature type="binding site" evidence="1">
    <location>
        <begin position="291"/>
        <end position="293"/>
    </location>
    <ligand>
        <name>4-CDP-2-C-methyl-D-erythritol 2-phosphate</name>
        <dbReference type="ChEBI" id="CHEBI:57919"/>
    </ligand>
</feature>
<feature type="binding site" evidence="1">
    <location>
        <begin position="367"/>
        <end position="370"/>
    </location>
    <ligand>
        <name>4-CDP-2-C-methyl-D-erythritol 2-phosphate</name>
        <dbReference type="ChEBI" id="CHEBI:57919"/>
    </ligand>
</feature>
<feature type="binding site" evidence="1">
    <location>
        <position position="374"/>
    </location>
    <ligand>
        <name>4-CDP-2-C-methyl-D-erythritol 2-phosphate</name>
        <dbReference type="ChEBI" id="CHEBI:57919"/>
    </ligand>
</feature>
<feature type="binding site" evidence="1">
    <location>
        <position position="377"/>
    </location>
    <ligand>
        <name>4-CDP-2-C-methyl-D-erythritol 2-phosphate</name>
        <dbReference type="ChEBI" id="CHEBI:57919"/>
    </ligand>
</feature>
<feature type="site" description="Transition state stabilizer" evidence="1">
    <location>
        <position position="15"/>
    </location>
</feature>
<feature type="site" description="Transition state stabilizer" evidence="1">
    <location>
        <position position="24"/>
    </location>
</feature>
<feature type="site" description="Positions MEP for the nucleophilic attack" evidence="1">
    <location>
        <position position="155"/>
    </location>
</feature>
<feature type="site" description="Positions MEP for the nucleophilic attack" evidence="1">
    <location>
        <position position="212"/>
    </location>
</feature>
<feature type="site" description="Transition state stabilizer" evidence="1">
    <location>
        <position position="269"/>
    </location>
</feature>
<feature type="site" description="Transition state stabilizer" evidence="1">
    <location>
        <position position="368"/>
    </location>
</feature>